<accession>B1W3Z7</accession>
<gene>
    <name evidence="1" type="primary">rplN</name>
    <name type="ordered locus">SGR_2824</name>
</gene>
<feature type="chain" id="PRO_1000144333" description="Large ribosomal subunit protein uL14">
    <location>
        <begin position="1"/>
        <end position="122"/>
    </location>
</feature>
<organism>
    <name type="scientific">Streptomyces griseus subsp. griseus (strain JCM 4626 / CBS 651.72 / NBRC 13350 / KCC S-0626 / ISP 5235)</name>
    <dbReference type="NCBI Taxonomy" id="455632"/>
    <lineage>
        <taxon>Bacteria</taxon>
        <taxon>Bacillati</taxon>
        <taxon>Actinomycetota</taxon>
        <taxon>Actinomycetes</taxon>
        <taxon>Kitasatosporales</taxon>
        <taxon>Streptomycetaceae</taxon>
        <taxon>Streptomyces</taxon>
    </lineage>
</organism>
<evidence type="ECO:0000255" key="1">
    <source>
        <dbReference type="HAMAP-Rule" id="MF_01367"/>
    </source>
</evidence>
<evidence type="ECO:0000305" key="2"/>
<protein>
    <recommendedName>
        <fullName evidence="1">Large ribosomal subunit protein uL14</fullName>
    </recommendedName>
    <alternativeName>
        <fullName evidence="2">50S ribosomal protein L14</fullName>
    </alternativeName>
</protein>
<comment type="function">
    <text evidence="1">Binds to 23S rRNA. Forms part of two intersubunit bridges in the 70S ribosome.</text>
</comment>
<comment type="subunit">
    <text evidence="1">Part of the 50S ribosomal subunit. Forms a cluster with proteins L3 and L19. In the 70S ribosome, L14 and L19 interact and together make contacts with the 16S rRNA in bridges B5 and B8.</text>
</comment>
<comment type="similarity">
    <text evidence="1">Belongs to the universal ribosomal protein uL14 family.</text>
</comment>
<name>RL14_STRGG</name>
<reference key="1">
    <citation type="journal article" date="2008" name="J. Bacteriol.">
        <title>Genome sequence of the streptomycin-producing microorganism Streptomyces griseus IFO 13350.</title>
        <authorList>
            <person name="Ohnishi Y."/>
            <person name="Ishikawa J."/>
            <person name="Hara H."/>
            <person name="Suzuki H."/>
            <person name="Ikenoya M."/>
            <person name="Ikeda H."/>
            <person name="Yamashita A."/>
            <person name="Hattori M."/>
            <person name="Horinouchi S."/>
        </authorList>
    </citation>
    <scope>NUCLEOTIDE SEQUENCE [LARGE SCALE GENOMIC DNA]</scope>
    <source>
        <strain>JCM 4626 / CBS 651.72 / NBRC 13350 / KCC S-0626 / ISP 5235</strain>
    </source>
</reference>
<keyword id="KW-0687">Ribonucleoprotein</keyword>
<keyword id="KW-0689">Ribosomal protein</keyword>
<keyword id="KW-0694">RNA-binding</keyword>
<keyword id="KW-0699">rRNA-binding</keyword>
<dbReference type="EMBL" id="AP009493">
    <property type="protein sequence ID" value="BAG19653.1"/>
    <property type="molecule type" value="Genomic_DNA"/>
</dbReference>
<dbReference type="RefSeq" id="WP_003966950.1">
    <property type="nucleotide sequence ID" value="NC_010572.1"/>
</dbReference>
<dbReference type="SMR" id="B1W3Z7"/>
<dbReference type="GeneID" id="97344290"/>
<dbReference type="KEGG" id="sgr:SGR_2824"/>
<dbReference type="eggNOG" id="COG0093">
    <property type="taxonomic scope" value="Bacteria"/>
</dbReference>
<dbReference type="HOGENOM" id="CLU_095071_2_1_11"/>
<dbReference type="Proteomes" id="UP000001685">
    <property type="component" value="Chromosome"/>
</dbReference>
<dbReference type="GO" id="GO:0022625">
    <property type="term" value="C:cytosolic large ribosomal subunit"/>
    <property type="evidence" value="ECO:0007669"/>
    <property type="project" value="TreeGrafter"/>
</dbReference>
<dbReference type="GO" id="GO:0070180">
    <property type="term" value="F:large ribosomal subunit rRNA binding"/>
    <property type="evidence" value="ECO:0007669"/>
    <property type="project" value="TreeGrafter"/>
</dbReference>
<dbReference type="GO" id="GO:0003735">
    <property type="term" value="F:structural constituent of ribosome"/>
    <property type="evidence" value="ECO:0007669"/>
    <property type="project" value="InterPro"/>
</dbReference>
<dbReference type="GO" id="GO:0006412">
    <property type="term" value="P:translation"/>
    <property type="evidence" value="ECO:0007669"/>
    <property type="project" value="UniProtKB-UniRule"/>
</dbReference>
<dbReference type="CDD" id="cd00337">
    <property type="entry name" value="Ribosomal_uL14"/>
    <property type="match status" value="1"/>
</dbReference>
<dbReference type="FunFam" id="2.40.150.20:FF:000001">
    <property type="entry name" value="50S ribosomal protein L14"/>
    <property type="match status" value="1"/>
</dbReference>
<dbReference type="Gene3D" id="2.40.150.20">
    <property type="entry name" value="Ribosomal protein L14"/>
    <property type="match status" value="1"/>
</dbReference>
<dbReference type="HAMAP" id="MF_01367">
    <property type="entry name" value="Ribosomal_uL14"/>
    <property type="match status" value="1"/>
</dbReference>
<dbReference type="InterPro" id="IPR000218">
    <property type="entry name" value="Ribosomal_uL14"/>
</dbReference>
<dbReference type="InterPro" id="IPR005745">
    <property type="entry name" value="Ribosomal_uL14_bac-type"/>
</dbReference>
<dbReference type="InterPro" id="IPR019972">
    <property type="entry name" value="Ribosomal_uL14_CS"/>
</dbReference>
<dbReference type="InterPro" id="IPR036853">
    <property type="entry name" value="Ribosomal_uL14_sf"/>
</dbReference>
<dbReference type="NCBIfam" id="TIGR01067">
    <property type="entry name" value="rplN_bact"/>
    <property type="match status" value="1"/>
</dbReference>
<dbReference type="PANTHER" id="PTHR11761">
    <property type="entry name" value="50S/60S RIBOSOMAL PROTEIN L14/L23"/>
    <property type="match status" value="1"/>
</dbReference>
<dbReference type="PANTHER" id="PTHR11761:SF3">
    <property type="entry name" value="LARGE RIBOSOMAL SUBUNIT PROTEIN UL14M"/>
    <property type="match status" value="1"/>
</dbReference>
<dbReference type="Pfam" id="PF00238">
    <property type="entry name" value="Ribosomal_L14"/>
    <property type="match status" value="1"/>
</dbReference>
<dbReference type="SMART" id="SM01374">
    <property type="entry name" value="Ribosomal_L14"/>
    <property type="match status" value="1"/>
</dbReference>
<dbReference type="SUPFAM" id="SSF50193">
    <property type="entry name" value="Ribosomal protein L14"/>
    <property type="match status" value="1"/>
</dbReference>
<dbReference type="PROSITE" id="PS00049">
    <property type="entry name" value="RIBOSOMAL_L14"/>
    <property type="match status" value="1"/>
</dbReference>
<proteinExistence type="inferred from homology"/>
<sequence>MIQQESRLRVADNTGAKEILTIRVLGGSGRRYAGIGDVIVATVKDAIPGGNVKKGDVVKAVIVRTVKERRRQDGSYIRFDENAAVILKNDGDPRGTRIFGPVGRELREKKFMKIISLAPEVL</sequence>